<evidence type="ECO:0000255" key="1"/>
<evidence type="ECO:0000269" key="2">
    <source>
    </source>
</evidence>
<evidence type="ECO:0000269" key="3">
    <source>
    </source>
</evidence>
<evidence type="ECO:0000269" key="4">
    <source>
    </source>
</evidence>
<evidence type="ECO:0000269" key="5">
    <source>
    </source>
</evidence>
<evidence type="ECO:0000269" key="6">
    <source>
    </source>
</evidence>
<evidence type="ECO:0000269" key="7">
    <source>
    </source>
</evidence>
<evidence type="ECO:0000303" key="8">
    <source>
    </source>
</evidence>
<evidence type="ECO:0000305" key="9"/>
<evidence type="ECO:0000305" key="10">
    <source>
    </source>
</evidence>
<evidence type="ECO:0000312" key="11">
    <source>
        <dbReference type="HGNC" id="HGNC:30563"/>
    </source>
</evidence>
<organism>
    <name type="scientific">Homo sapiens</name>
    <name type="common">Human</name>
    <dbReference type="NCBI Taxonomy" id="9606"/>
    <lineage>
        <taxon>Eukaryota</taxon>
        <taxon>Metazoa</taxon>
        <taxon>Chordata</taxon>
        <taxon>Craniata</taxon>
        <taxon>Vertebrata</taxon>
        <taxon>Euteleostomi</taxon>
        <taxon>Mammalia</taxon>
        <taxon>Eutheria</taxon>
        <taxon>Euarchontoglires</taxon>
        <taxon>Primates</taxon>
        <taxon>Haplorrhini</taxon>
        <taxon>Catarrhini</taxon>
        <taxon>Hominidae</taxon>
        <taxon>Homo</taxon>
    </lineage>
</organism>
<dbReference type="EC" id="6.1.1.15" evidence="10"/>
<dbReference type="EMBL" id="AK025585">
    <property type="protein sequence ID" value="BAB15178.1"/>
    <property type="status" value="ALT_INIT"/>
    <property type="molecule type" value="mRNA"/>
</dbReference>
<dbReference type="EMBL" id="AK289679">
    <property type="protein sequence ID" value="BAF82368.1"/>
    <property type="molecule type" value="mRNA"/>
</dbReference>
<dbReference type="EMBL" id="AL139244">
    <property type="status" value="NOT_ANNOTATED_CDS"/>
    <property type="molecule type" value="Genomic_DNA"/>
</dbReference>
<dbReference type="EMBL" id="CH471059">
    <property type="protein sequence ID" value="EAX06669.1"/>
    <property type="molecule type" value="Genomic_DNA"/>
</dbReference>
<dbReference type="EMBL" id="BC007956">
    <property type="protein sequence ID" value="AAH07956.2"/>
    <property type="molecule type" value="mRNA"/>
</dbReference>
<dbReference type="EMBL" id="BC011758">
    <property type="protein sequence ID" value="AAH11758.2"/>
    <property type="molecule type" value="mRNA"/>
</dbReference>
<dbReference type="EMBL" id="AL117473">
    <property type="protein sequence ID" value="CAB55948.1"/>
    <property type="molecule type" value="mRNA"/>
</dbReference>
<dbReference type="CCDS" id="CCDS597.1"/>
<dbReference type="PIR" id="T17258">
    <property type="entry name" value="T17258"/>
</dbReference>
<dbReference type="RefSeq" id="NP_689481.2">
    <property type="nucleotide sequence ID" value="NM_152268.3"/>
</dbReference>
<dbReference type="SMR" id="Q7L3T8"/>
<dbReference type="BioGRID" id="117457">
    <property type="interactions" value="54"/>
</dbReference>
<dbReference type="FunCoup" id="Q7L3T8">
    <property type="interactions" value="1236"/>
</dbReference>
<dbReference type="IntAct" id="Q7L3T8">
    <property type="interactions" value="28"/>
</dbReference>
<dbReference type="MINT" id="Q7L3T8"/>
<dbReference type="STRING" id="9606.ENSP00000360327"/>
<dbReference type="DrugBank" id="DB00172">
    <property type="generic name" value="Proline"/>
</dbReference>
<dbReference type="iPTMnet" id="Q7L3T8"/>
<dbReference type="PhosphoSitePlus" id="Q7L3T8"/>
<dbReference type="SwissPalm" id="Q7L3T8"/>
<dbReference type="BioMuta" id="PARS2"/>
<dbReference type="DMDM" id="73919761"/>
<dbReference type="jPOST" id="Q7L3T8"/>
<dbReference type="MassIVE" id="Q7L3T8"/>
<dbReference type="PaxDb" id="9606-ENSP00000360327"/>
<dbReference type="PeptideAtlas" id="Q7L3T8"/>
<dbReference type="ProteomicsDB" id="68772"/>
<dbReference type="Pumba" id="Q7L3T8"/>
<dbReference type="Antibodypedia" id="33219">
    <property type="antibodies" value="61 antibodies from 20 providers"/>
</dbReference>
<dbReference type="DNASU" id="25973"/>
<dbReference type="Ensembl" id="ENST00000371279.4">
    <property type="protein sequence ID" value="ENSP00000360327.3"/>
    <property type="gene ID" value="ENSG00000162396.6"/>
</dbReference>
<dbReference type="GeneID" id="25973"/>
<dbReference type="KEGG" id="hsa:25973"/>
<dbReference type="MANE-Select" id="ENST00000371279.4">
    <property type="protein sequence ID" value="ENSP00000360327.3"/>
    <property type="RefSeq nucleotide sequence ID" value="NM_152268.4"/>
    <property type="RefSeq protein sequence ID" value="NP_689481.2"/>
</dbReference>
<dbReference type="UCSC" id="uc001cxy.4">
    <property type="organism name" value="human"/>
</dbReference>
<dbReference type="AGR" id="HGNC:30563"/>
<dbReference type="CTD" id="25973"/>
<dbReference type="DisGeNET" id="25973"/>
<dbReference type="GeneCards" id="PARS2"/>
<dbReference type="HGNC" id="HGNC:30563">
    <property type="gene designation" value="PARS2"/>
</dbReference>
<dbReference type="HPA" id="ENSG00000162396">
    <property type="expression patterns" value="Low tissue specificity"/>
</dbReference>
<dbReference type="MalaCards" id="PARS2"/>
<dbReference type="MIM" id="612036">
    <property type="type" value="gene"/>
</dbReference>
<dbReference type="MIM" id="618437">
    <property type="type" value="phenotype"/>
</dbReference>
<dbReference type="neXtProt" id="NX_Q7L3T8"/>
<dbReference type="OpenTargets" id="ENSG00000162396"/>
<dbReference type="Orphanet" id="442835">
    <property type="disease" value="Non-specific early-onset epileptic encephalopathy"/>
</dbReference>
<dbReference type="PharmGKB" id="PA142671198"/>
<dbReference type="VEuPathDB" id="HostDB:ENSG00000162396"/>
<dbReference type="eggNOG" id="KOG2324">
    <property type="taxonomic scope" value="Eukaryota"/>
</dbReference>
<dbReference type="GeneTree" id="ENSGT00390000010922"/>
<dbReference type="HOGENOM" id="CLU_016739_4_1_1"/>
<dbReference type="InParanoid" id="Q7L3T8"/>
<dbReference type="OMA" id="NCDYAAN"/>
<dbReference type="OrthoDB" id="10267474at2759"/>
<dbReference type="PAN-GO" id="Q7L3T8">
    <property type="GO annotations" value="3 GO annotations based on evolutionary models"/>
</dbReference>
<dbReference type="PhylomeDB" id="Q7L3T8"/>
<dbReference type="TreeFam" id="TF105607"/>
<dbReference type="PathwayCommons" id="Q7L3T8"/>
<dbReference type="Reactome" id="R-HSA-379726">
    <property type="pathway name" value="Mitochondrial tRNA aminoacylation"/>
</dbReference>
<dbReference type="SignaLink" id="Q7L3T8"/>
<dbReference type="BioGRID-ORCS" id="25973">
    <property type="hits" value="386 hits in 1170 CRISPR screens"/>
</dbReference>
<dbReference type="GenomeRNAi" id="25973"/>
<dbReference type="Pharos" id="Q7L3T8">
    <property type="development level" value="Tbio"/>
</dbReference>
<dbReference type="PRO" id="PR:Q7L3T8"/>
<dbReference type="Proteomes" id="UP000005640">
    <property type="component" value="Chromosome 1"/>
</dbReference>
<dbReference type="RNAct" id="Q7L3T8">
    <property type="molecule type" value="protein"/>
</dbReference>
<dbReference type="Bgee" id="ENSG00000162396">
    <property type="expression patterns" value="Expressed in secondary oocyte and 140 other cell types or tissues"/>
</dbReference>
<dbReference type="GO" id="GO:0005759">
    <property type="term" value="C:mitochondrial matrix"/>
    <property type="evidence" value="ECO:0007669"/>
    <property type="project" value="UniProtKB-SubCell"/>
</dbReference>
<dbReference type="GO" id="GO:0005739">
    <property type="term" value="C:mitochondrion"/>
    <property type="evidence" value="ECO:0006056"/>
    <property type="project" value="FlyBase"/>
</dbReference>
<dbReference type="GO" id="GO:0005524">
    <property type="term" value="F:ATP binding"/>
    <property type="evidence" value="ECO:0007669"/>
    <property type="project" value="UniProtKB-KW"/>
</dbReference>
<dbReference type="GO" id="GO:0004827">
    <property type="term" value="F:proline-tRNA ligase activity"/>
    <property type="evidence" value="ECO:0000318"/>
    <property type="project" value="GO_Central"/>
</dbReference>
<dbReference type="GO" id="GO:0006433">
    <property type="term" value="P:prolyl-tRNA aminoacylation"/>
    <property type="evidence" value="ECO:0000318"/>
    <property type="project" value="GO_Central"/>
</dbReference>
<dbReference type="CDD" id="cd00779">
    <property type="entry name" value="ProRS_core_prok"/>
    <property type="match status" value="1"/>
</dbReference>
<dbReference type="FunFam" id="3.40.50.800:FF:000020">
    <property type="entry name" value="Probable proline--tRNA ligase, mitochondrial"/>
    <property type="match status" value="1"/>
</dbReference>
<dbReference type="FunFam" id="3.30.930.10:FF:000042">
    <property type="entry name" value="probable proline--tRNA ligase, mitochondrial"/>
    <property type="match status" value="1"/>
</dbReference>
<dbReference type="Gene3D" id="3.40.50.800">
    <property type="entry name" value="Anticodon-binding domain"/>
    <property type="match status" value="1"/>
</dbReference>
<dbReference type="Gene3D" id="3.30.930.10">
    <property type="entry name" value="Bira Bifunctional Protein, Domain 2"/>
    <property type="match status" value="1"/>
</dbReference>
<dbReference type="InterPro" id="IPR002314">
    <property type="entry name" value="aa-tRNA-synt_IIb"/>
</dbReference>
<dbReference type="InterPro" id="IPR006195">
    <property type="entry name" value="aa-tRNA-synth_II"/>
</dbReference>
<dbReference type="InterPro" id="IPR045864">
    <property type="entry name" value="aa-tRNA-synth_II/BPL/LPL"/>
</dbReference>
<dbReference type="InterPro" id="IPR004154">
    <property type="entry name" value="Anticodon-bd"/>
</dbReference>
<dbReference type="InterPro" id="IPR036621">
    <property type="entry name" value="Anticodon-bd_dom_sf"/>
</dbReference>
<dbReference type="InterPro" id="IPR002316">
    <property type="entry name" value="Pro-tRNA-ligase_IIa"/>
</dbReference>
<dbReference type="InterPro" id="IPR050062">
    <property type="entry name" value="Pro-tRNA_synthetase"/>
</dbReference>
<dbReference type="InterPro" id="IPR033730">
    <property type="entry name" value="ProRS_core_prok"/>
</dbReference>
<dbReference type="PANTHER" id="PTHR42753">
    <property type="entry name" value="MITOCHONDRIAL RIBOSOME PROTEIN L39/PROLYL-TRNA LIGASE FAMILY MEMBER"/>
    <property type="match status" value="1"/>
</dbReference>
<dbReference type="PANTHER" id="PTHR42753:SF10">
    <property type="entry name" value="PROLINE--TRNA LIGASE, MITOCHONDRIAL-RELATED"/>
    <property type="match status" value="1"/>
</dbReference>
<dbReference type="Pfam" id="PF03129">
    <property type="entry name" value="HGTP_anticodon"/>
    <property type="match status" value="1"/>
</dbReference>
<dbReference type="Pfam" id="PF00587">
    <property type="entry name" value="tRNA-synt_2b"/>
    <property type="match status" value="1"/>
</dbReference>
<dbReference type="PRINTS" id="PR01046">
    <property type="entry name" value="TRNASYNTHPRO"/>
</dbReference>
<dbReference type="SUPFAM" id="SSF52954">
    <property type="entry name" value="Class II aaRS ABD-related"/>
    <property type="match status" value="1"/>
</dbReference>
<dbReference type="SUPFAM" id="SSF55681">
    <property type="entry name" value="Class II aaRS and biotin synthetases"/>
    <property type="match status" value="1"/>
</dbReference>
<dbReference type="PROSITE" id="PS50862">
    <property type="entry name" value="AA_TRNA_LIGASE_II"/>
    <property type="match status" value="1"/>
</dbReference>
<name>SYPM_HUMAN</name>
<accession>Q7L3T8</accession>
<accession>A8K0W4</accession>
<accession>Q9H6S5</accession>
<accession>Q9UFT1</accession>
<protein>
    <recommendedName>
        <fullName>Probable proline--tRNA ligase, mitochondrial</fullName>
        <ecNumber evidence="10">6.1.1.15</ecNumber>
    </recommendedName>
    <alternativeName>
        <fullName>Prolyl-tRNA synthetase</fullName>
        <shortName evidence="8">ProRS</shortName>
    </alternativeName>
    <alternativeName>
        <fullName>Prolyl-tRNA synthetase 2, mitochondrial</fullName>
    </alternativeName>
</protein>
<sequence>MEGLLTRCRALPALATCSRQLSGYVPCRFHHCAPRRGRRLLLSRVFQPQNLREDRVLSLQDKSDDLTCKSQRLMLQVGLIYPASPGCYHLLPYTVRAMEKLVRVIDQEMQAIGGQKVNMPSLSPAELWQATNRWDLMGKELLRLRDRHGKEYCLGPTHEEAITALIASQKKLSYKQLPFLLYQVTRKFRDEPRPRFGLLRGREFYMKDMYTFDSSPEAAQQTYSLVCDAYCSLFNKLGLPFVKVQADVGTIGGTVSHEFQLPVDIGEDRLAICPRCSFSANMETLDLSQMNCPACQGPLTKTKGIEVGHTFYLGTKYSSIFNAQFTNVCGKPTLAEMGCYGLGVTRILAAAIEVLSTEDCVRWPSLLAPYQACLIPPKKGSKEQAASELIGQLYDHITEAVPQLHGEVLLDDRTHLTIGNRLKDANKFGYPFVIIAGKRALEDPAHFEVWCQNTGEVAFLTKDGVMDLLTPVQTV</sequence>
<gene>
    <name evidence="11" type="primary">PARS2</name>
</gene>
<keyword id="KW-0030">Aminoacyl-tRNA synthetase</keyword>
<keyword id="KW-0067">ATP-binding</keyword>
<keyword id="KW-0225">Disease variant</keyword>
<keyword id="KW-0887">Epilepsy</keyword>
<keyword id="KW-0436">Ligase</keyword>
<keyword id="KW-0496">Mitochondrion</keyword>
<keyword id="KW-0547">Nucleotide-binding</keyword>
<keyword id="KW-0648">Protein biosynthesis</keyword>
<keyword id="KW-1267">Proteomics identification</keyword>
<keyword id="KW-1185">Reference proteome</keyword>
<keyword id="KW-0809">Transit peptide</keyword>
<proteinExistence type="evidence at protein level"/>
<feature type="transit peptide" description="Mitochondrion" evidence="1">
    <location>
        <begin position="1"/>
        <end position="29"/>
    </location>
</feature>
<feature type="chain" id="PRO_0000035818" description="Probable proline--tRNA ligase, mitochondrial">
    <location>
        <begin position="30"/>
        <end position="475"/>
    </location>
</feature>
<feature type="sequence variant" id="VAR_052644" description="In dbSNP:rs11577368.">
    <original>R</original>
    <variation>S</variation>
    <location>
        <position position="28"/>
    </location>
</feature>
<feature type="sequence variant" id="VAR_082617" description="In DEE75; uncertain significance; dbSNP:rs1246773873." evidence="4">
    <original>I</original>
    <variation>T</variation>
    <location>
        <position position="80"/>
    </location>
</feature>
<feature type="sequence variant" id="VAR_082149" description="In DEE75; uncertain significance; dbSNP:rs147227819." evidence="3 5 6 7">
    <original>V</original>
    <variation>I</variation>
    <location>
        <position position="95"/>
    </location>
</feature>
<feature type="sequence variant" id="VAR_088479" description="Found in a patient with an aminoacyl-tRNA synthetase abnormality; uncertain significance." evidence="7">
    <location>
        <position position="103"/>
    </location>
</feature>
<feature type="sequence variant" id="VAR_082618" description="In DEE75; uncertain significance; dbSNP:rs141760650." evidence="5">
    <original>R</original>
    <variation>G</variation>
    <location>
        <position position="202"/>
    </location>
</feature>
<feature type="sequence variant" id="VAR_082619" description="In DEE75; uncertain significance; dbSNP:rs1557762729." evidence="3">
    <original>E</original>
    <variation>K</variation>
    <location>
        <position position="203"/>
    </location>
</feature>
<feature type="sequence variant" id="VAR_034527" description="In dbSNP:rs2270004.">
    <original>N</original>
    <variation>S</variation>
    <location>
        <position position="235"/>
    </location>
</feature>
<feature type="sequence variant" id="VAR_082620" description="In DEE75; uncertain significance; dbSNP:rs730882153." evidence="2">
    <original>S</original>
    <variation>L</variation>
    <location>
        <position position="279"/>
    </location>
</feature>
<feature type="sequence variant" id="VAR_082621" description="In DEE75; uncertain significance; dbSNP:rs35201073." evidence="4">
    <original>P</original>
    <variation>R</variation>
    <location>
        <position position="364"/>
    </location>
</feature>
<comment type="function">
    <text evidence="10">Mitochondrial aminoacyl-tRNA synthetase that catalyzes the specific attachment of the proline amino acid (aa) to the homologous transfer RNA (tRNA), further participating in protein synthesis. The reaction occurs in a two steps: proline is first activated by ATP to form Pro-AMP and then transferred to the acceptor end of tRNA(Pro).</text>
</comment>
<comment type="catalytic activity">
    <reaction evidence="10">
        <text>tRNA(Pro) + L-proline + ATP = L-prolyl-tRNA(Pro) + AMP + diphosphate</text>
        <dbReference type="Rhea" id="RHEA:14305"/>
        <dbReference type="Rhea" id="RHEA-COMP:9700"/>
        <dbReference type="Rhea" id="RHEA-COMP:9702"/>
        <dbReference type="ChEBI" id="CHEBI:30616"/>
        <dbReference type="ChEBI" id="CHEBI:33019"/>
        <dbReference type="ChEBI" id="CHEBI:60039"/>
        <dbReference type="ChEBI" id="CHEBI:78442"/>
        <dbReference type="ChEBI" id="CHEBI:78532"/>
        <dbReference type="ChEBI" id="CHEBI:456215"/>
        <dbReference type="EC" id="6.1.1.15"/>
    </reaction>
</comment>
<comment type="subcellular location">
    <subcellularLocation>
        <location evidence="10">Mitochondrion matrix</location>
    </subcellularLocation>
</comment>
<comment type="disease" evidence="2 3 4 5 6">
    <disease id="DI-05571">
        <name>Developmental and epileptic encephalopathy 75</name>
        <acronym>DEE75</acronym>
        <description>A form of epileptic encephalopathy, a heterogeneous group of severe early-onset epilepsies characterized by refractory seizures, neurodevelopmental impairment, and poor prognosis. Development is normal prior to seizure onset, after which cognitive and motor delays become apparent. DEE75 is an autosomal recessive form characterized by onset of severe refractory seizures in the first months of life.</description>
        <dbReference type="MIM" id="618437"/>
    </disease>
    <text>The disease may be caused by variants affecting the gene represented in this entry.</text>
</comment>
<comment type="similarity">
    <text evidence="9">Belongs to the class-II aminoacyl-tRNA synthetase family.</text>
</comment>
<comment type="sequence caution" evidence="9">
    <conflict type="erroneous initiation">
        <sequence resource="EMBL-CDS" id="BAB15178"/>
    </conflict>
    <text>Truncated N-terminus.</text>
</comment>
<reference key="1">
    <citation type="journal article" date="2004" name="Nat. Genet.">
        <title>Complete sequencing and characterization of 21,243 full-length human cDNAs.</title>
        <authorList>
            <person name="Ota T."/>
            <person name="Suzuki Y."/>
            <person name="Nishikawa T."/>
            <person name="Otsuki T."/>
            <person name="Sugiyama T."/>
            <person name="Irie R."/>
            <person name="Wakamatsu A."/>
            <person name="Hayashi K."/>
            <person name="Sato H."/>
            <person name="Nagai K."/>
            <person name="Kimura K."/>
            <person name="Makita H."/>
            <person name="Sekine M."/>
            <person name="Obayashi M."/>
            <person name="Nishi T."/>
            <person name="Shibahara T."/>
            <person name="Tanaka T."/>
            <person name="Ishii S."/>
            <person name="Yamamoto J."/>
            <person name="Saito K."/>
            <person name="Kawai Y."/>
            <person name="Isono Y."/>
            <person name="Nakamura Y."/>
            <person name="Nagahari K."/>
            <person name="Murakami K."/>
            <person name="Yasuda T."/>
            <person name="Iwayanagi T."/>
            <person name="Wagatsuma M."/>
            <person name="Shiratori A."/>
            <person name="Sudo H."/>
            <person name="Hosoiri T."/>
            <person name="Kaku Y."/>
            <person name="Kodaira H."/>
            <person name="Kondo H."/>
            <person name="Sugawara M."/>
            <person name="Takahashi M."/>
            <person name="Kanda K."/>
            <person name="Yokoi T."/>
            <person name="Furuya T."/>
            <person name="Kikkawa E."/>
            <person name="Omura Y."/>
            <person name="Abe K."/>
            <person name="Kamihara K."/>
            <person name="Katsuta N."/>
            <person name="Sato K."/>
            <person name="Tanikawa M."/>
            <person name="Yamazaki M."/>
            <person name="Ninomiya K."/>
            <person name="Ishibashi T."/>
            <person name="Yamashita H."/>
            <person name="Murakawa K."/>
            <person name="Fujimori K."/>
            <person name="Tanai H."/>
            <person name="Kimata M."/>
            <person name="Watanabe M."/>
            <person name="Hiraoka S."/>
            <person name="Chiba Y."/>
            <person name="Ishida S."/>
            <person name="Ono Y."/>
            <person name="Takiguchi S."/>
            <person name="Watanabe S."/>
            <person name="Yosida M."/>
            <person name="Hotuta T."/>
            <person name="Kusano J."/>
            <person name="Kanehori K."/>
            <person name="Takahashi-Fujii A."/>
            <person name="Hara H."/>
            <person name="Tanase T.-O."/>
            <person name="Nomura Y."/>
            <person name="Togiya S."/>
            <person name="Komai F."/>
            <person name="Hara R."/>
            <person name="Takeuchi K."/>
            <person name="Arita M."/>
            <person name="Imose N."/>
            <person name="Musashino K."/>
            <person name="Yuuki H."/>
            <person name="Oshima A."/>
            <person name="Sasaki N."/>
            <person name="Aotsuka S."/>
            <person name="Yoshikawa Y."/>
            <person name="Matsunawa H."/>
            <person name="Ichihara T."/>
            <person name="Shiohata N."/>
            <person name="Sano S."/>
            <person name="Moriya S."/>
            <person name="Momiyama H."/>
            <person name="Satoh N."/>
            <person name="Takami S."/>
            <person name="Terashima Y."/>
            <person name="Suzuki O."/>
            <person name="Nakagawa S."/>
            <person name="Senoh A."/>
            <person name="Mizoguchi H."/>
            <person name="Goto Y."/>
            <person name="Shimizu F."/>
            <person name="Wakebe H."/>
            <person name="Hishigaki H."/>
            <person name="Watanabe T."/>
            <person name="Sugiyama A."/>
            <person name="Takemoto M."/>
            <person name="Kawakami B."/>
            <person name="Yamazaki M."/>
            <person name="Watanabe K."/>
            <person name="Kumagai A."/>
            <person name="Itakura S."/>
            <person name="Fukuzumi Y."/>
            <person name="Fujimori Y."/>
            <person name="Komiyama M."/>
            <person name="Tashiro H."/>
            <person name="Tanigami A."/>
            <person name="Fujiwara T."/>
            <person name="Ono T."/>
            <person name="Yamada K."/>
            <person name="Fujii Y."/>
            <person name="Ozaki K."/>
            <person name="Hirao M."/>
            <person name="Ohmori Y."/>
            <person name="Kawabata A."/>
            <person name="Hikiji T."/>
            <person name="Kobatake N."/>
            <person name="Inagaki H."/>
            <person name="Ikema Y."/>
            <person name="Okamoto S."/>
            <person name="Okitani R."/>
            <person name="Kawakami T."/>
            <person name="Noguchi S."/>
            <person name="Itoh T."/>
            <person name="Shigeta K."/>
            <person name="Senba T."/>
            <person name="Matsumura K."/>
            <person name="Nakajima Y."/>
            <person name="Mizuno T."/>
            <person name="Morinaga M."/>
            <person name="Sasaki M."/>
            <person name="Togashi T."/>
            <person name="Oyama M."/>
            <person name="Hata H."/>
            <person name="Watanabe M."/>
            <person name="Komatsu T."/>
            <person name="Mizushima-Sugano J."/>
            <person name="Satoh T."/>
            <person name="Shirai Y."/>
            <person name="Takahashi Y."/>
            <person name="Nakagawa K."/>
            <person name="Okumura K."/>
            <person name="Nagase T."/>
            <person name="Nomura N."/>
            <person name="Kikuchi H."/>
            <person name="Masuho Y."/>
            <person name="Yamashita R."/>
            <person name="Nakai K."/>
            <person name="Yada T."/>
            <person name="Nakamura Y."/>
            <person name="Ohara O."/>
            <person name="Isogai T."/>
            <person name="Sugano S."/>
        </authorList>
    </citation>
    <scope>NUCLEOTIDE SEQUENCE [LARGE SCALE MRNA]</scope>
    <source>
        <tissue>Amygdala</tissue>
    </source>
</reference>
<reference key="2">
    <citation type="journal article" date="2006" name="Nature">
        <title>The DNA sequence and biological annotation of human chromosome 1.</title>
        <authorList>
            <person name="Gregory S.G."/>
            <person name="Barlow K.F."/>
            <person name="McLay K.E."/>
            <person name="Kaul R."/>
            <person name="Swarbreck D."/>
            <person name="Dunham A."/>
            <person name="Scott C.E."/>
            <person name="Howe K.L."/>
            <person name="Woodfine K."/>
            <person name="Spencer C.C.A."/>
            <person name="Jones M.C."/>
            <person name="Gillson C."/>
            <person name="Searle S."/>
            <person name="Zhou Y."/>
            <person name="Kokocinski F."/>
            <person name="McDonald L."/>
            <person name="Evans R."/>
            <person name="Phillips K."/>
            <person name="Atkinson A."/>
            <person name="Cooper R."/>
            <person name="Jones C."/>
            <person name="Hall R.E."/>
            <person name="Andrews T.D."/>
            <person name="Lloyd C."/>
            <person name="Ainscough R."/>
            <person name="Almeida J.P."/>
            <person name="Ambrose K.D."/>
            <person name="Anderson F."/>
            <person name="Andrew R.W."/>
            <person name="Ashwell R.I.S."/>
            <person name="Aubin K."/>
            <person name="Babbage A.K."/>
            <person name="Bagguley C.L."/>
            <person name="Bailey J."/>
            <person name="Beasley H."/>
            <person name="Bethel G."/>
            <person name="Bird C.P."/>
            <person name="Bray-Allen S."/>
            <person name="Brown J.Y."/>
            <person name="Brown A.J."/>
            <person name="Buckley D."/>
            <person name="Burton J."/>
            <person name="Bye J."/>
            <person name="Carder C."/>
            <person name="Chapman J.C."/>
            <person name="Clark S.Y."/>
            <person name="Clarke G."/>
            <person name="Clee C."/>
            <person name="Cobley V."/>
            <person name="Collier R.E."/>
            <person name="Corby N."/>
            <person name="Coville G.J."/>
            <person name="Davies J."/>
            <person name="Deadman R."/>
            <person name="Dunn M."/>
            <person name="Earthrowl M."/>
            <person name="Ellington A.G."/>
            <person name="Errington H."/>
            <person name="Frankish A."/>
            <person name="Frankland J."/>
            <person name="French L."/>
            <person name="Garner P."/>
            <person name="Garnett J."/>
            <person name="Gay L."/>
            <person name="Ghori M.R.J."/>
            <person name="Gibson R."/>
            <person name="Gilby L.M."/>
            <person name="Gillett W."/>
            <person name="Glithero R.J."/>
            <person name="Grafham D.V."/>
            <person name="Griffiths C."/>
            <person name="Griffiths-Jones S."/>
            <person name="Grocock R."/>
            <person name="Hammond S."/>
            <person name="Harrison E.S.I."/>
            <person name="Hart E."/>
            <person name="Haugen E."/>
            <person name="Heath P.D."/>
            <person name="Holmes S."/>
            <person name="Holt K."/>
            <person name="Howden P.J."/>
            <person name="Hunt A.R."/>
            <person name="Hunt S.E."/>
            <person name="Hunter G."/>
            <person name="Isherwood J."/>
            <person name="James R."/>
            <person name="Johnson C."/>
            <person name="Johnson D."/>
            <person name="Joy A."/>
            <person name="Kay M."/>
            <person name="Kershaw J.K."/>
            <person name="Kibukawa M."/>
            <person name="Kimberley A.M."/>
            <person name="King A."/>
            <person name="Knights A.J."/>
            <person name="Lad H."/>
            <person name="Laird G."/>
            <person name="Lawlor S."/>
            <person name="Leongamornlert D.A."/>
            <person name="Lloyd D.M."/>
            <person name="Loveland J."/>
            <person name="Lovell J."/>
            <person name="Lush M.J."/>
            <person name="Lyne R."/>
            <person name="Martin S."/>
            <person name="Mashreghi-Mohammadi M."/>
            <person name="Matthews L."/>
            <person name="Matthews N.S.W."/>
            <person name="McLaren S."/>
            <person name="Milne S."/>
            <person name="Mistry S."/>
            <person name="Moore M.J.F."/>
            <person name="Nickerson T."/>
            <person name="O'Dell C.N."/>
            <person name="Oliver K."/>
            <person name="Palmeiri A."/>
            <person name="Palmer S.A."/>
            <person name="Parker A."/>
            <person name="Patel D."/>
            <person name="Pearce A.V."/>
            <person name="Peck A.I."/>
            <person name="Pelan S."/>
            <person name="Phelps K."/>
            <person name="Phillimore B.J."/>
            <person name="Plumb R."/>
            <person name="Rajan J."/>
            <person name="Raymond C."/>
            <person name="Rouse G."/>
            <person name="Saenphimmachak C."/>
            <person name="Sehra H.K."/>
            <person name="Sheridan E."/>
            <person name="Shownkeen R."/>
            <person name="Sims S."/>
            <person name="Skuce C.D."/>
            <person name="Smith M."/>
            <person name="Steward C."/>
            <person name="Subramanian S."/>
            <person name="Sycamore N."/>
            <person name="Tracey A."/>
            <person name="Tromans A."/>
            <person name="Van Helmond Z."/>
            <person name="Wall M."/>
            <person name="Wallis J.M."/>
            <person name="White S."/>
            <person name="Whitehead S.L."/>
            <person name="Wilkinson J.E."/>
            <person name="Willey D.L."/>
            <person name="Williams H."/>
            <person name="Wilming L."/>
            <person name="Wray P.W."/>
            <person name="Wu Z."/>
            <person name="Coulson A."/>
            <person name="Vaudin M."/>
            <person name="Sulston J.E."/>
            <person name="Durbin R.M."/>
            <person name="Hubbard T."/>
            <person name="Wooster R."/>
            <person name="Dunham I."/>
            <person name="Carter N.P."/>
            <person name="McVean G."/>
            <person name="Ross M.T."/>
            <person name="Harrow J."/>
            <person name="Olson M.V."/>
            <person name="Beck S."/>
            <person name="Rogers J."/>
            <person name="Bentley D.R."/>
        </authorList>
    </citation>
    <scope>NUCLEOTIDE SEQUENCE [LARGE SCALE GENOMIC DNA]</scope>
</reference>
<reference key="3">
    <citation type="submission" date="2005-09" db="EMBL/GenBank/DDBJ databases">
        <authorList>
            <person name="Mural R.J."/>
            <person name="Istrail S."/>
            <person name="Sutton G.G."/>
            <person name="Florea L."/>
            <person name="Halpern A.L."/>
            <person name="Mobarry C.M."/>
            <person name="Lippert R."/>
            <person name="Walenz B."/>
            <person name="Shatkay H."/>
            <person name="Dew I."/>
            <person name="Miller J.R."/>
            <person name="Flanigan M.J."/>
            <person name="Edwards N.J."/>
            <person name="Bolanos R."/>
            <person name="Fasulo D."/>
            <person name="Halldorsson B.V."/>
            <person name="Hannenhalli S."/>
            <person name="Turner R."/>
            <person name="Yooseph S."/>
            <person name="Lu F."/>
            <person name="Nusskern D.R."/>
            <person name="Shue B.C."/>
            <person name="Zheng X.H."/>
            <person name="Zhong F."/>
            <person name="Delcher A.L."/>
            <person name="Huson D.H."/>
            <person name="Kravitz S.A."/>
            <person name="Mouchard L."/>
            <person name="Reinert K."/>
            <person name="Remington K.A."/>
            <person name="Clark A.G."/>
            <person name="Waterman M.S."/>
            <person name="Eichler E.E."/>
            <person name="Adams M.D."/>
            <person name="Hunkapiller M.W."/>
            <person name="Myers E.W."/>
            <person name="Venter J.C."/>
        </authorList>
    </citation>
    <scope>NUCLEOTIDE SEQUENCE [LARGE SCALE GENOMIC DNA]</scope>
</reference>
<reference key="4">
    <citation type="journal article" date="2004" name="Genome Res.">
        <title>The status, quality, and expansion of the NIH full-length cDNA project: the Mammalian Gene Collection (MGC).</title>
        <authorList>
            <consortium name="The MGC Project Team"/>
        </authorList>
    </citation>
    <scope>NUCLEOTIDE SEQUENCE [LARGE SCALE MRNA]</scope>
    <source>
        <tissue>Muscle</tissue>
        <tissue>Uterus</tissue>
    </source>
</reference>
<reference key="5">
    <citation type="journal article" date="2007" name="BMC Genomics">
        <title>The full-ORF clone resource of the German cDNA consortium.</title>
        <authorList>
            <person name="Bechtel S."/>
            <person name="Rosenfelder H."/>
            <person name="Duda A."/>
            <person name="Schmidt C.P."/>
            <person name="Ernst U."/>
            <person name="Wellenreuther R."/>
            <person name="Mehrle A."/>
            <person name="Schuster C."/>
            <person name="Bahr A."/>
            <person name="Bloecker H."/>
            <person name="Heubner D."/>
            <person name="Hoerlein A."/>
            <person name="Michel G."/>
            <person name="Wedler H."/>
            <person name="Koehrer K."/>
            <person name="Ottenwaelder B."/>
            <person name="Poustka A."/>
            <person name="Wiemann S."/>
            <person name="Schupp I."/>
        </authorList>
    </citation>
    <scope>NUCLEOTIDE SEQUENCE [LARGE SCALE MRNA] OF 67-475</scope>
    <source>
        <tissue>Mammary cancer</tissue>
    </source>
</reference>
<reference key="6">
    <citation type="journal article" date="2014" name="J. Proteomics">
        <title>An enzyme assisted RP-RPLC approach for in-depth analysis of human liver phosphoproteome.</title>
        <authorList>
            <person name="Bian Y."/>
            <person name="Song C."/>
            <person name="Cheng K."/>
            <person name="Dong M."/>
            <person name="Wang F."/>
            <person name="Huang J."/>
            <person name="Sun D."/>
            <person name="Wang L."/>
            <person name="Ye M."/>
            <person name="Zou H."/>
        </authorList>
    </citation>
    <scope>IDENTIFICATION BY MASS SPECTROMETRY [LARGE SCALE ANALYSIS]</scope>
    <source>
        <tissue>Liver</tissue>
    </source>
</reference>
<reference key="7">
    <citation type="journal article" date="2005" name="Biochemistry">
        <title>Toward the full set of human mitochondrial aminoacyl-tRNA synthetases: characterization of AspRS and TyrRS.</title>
        <authorList>
            <person name="Bonnefond L."/>
            <person name="Fender A."/>
            <person name="Rudinger-Thirion J."/>
            <person name="Giege R."/>
            <person name="Florentz C."/>
            <person name="Sissler M."/>
        </authorList>
    </citation>
    <scope>IDENTIFICATION</scope>
</reference>
<reference key="8">
    <citation type="journal article" date="2015" name="Mol. Genet. Genomic Med.">
        <title>Whole exome sequencing reveals mutations in NARS2 and PARS2, encoding the mitochondrial asparaginyl-tRNA synthetase and prolyl-tRNA synthetase, in patients with Alpers syndrome.</title>
        <authorList>
            <person name="Sofou K."/>
            <person name="Kollberg G."/>
            <person name="Holmstroem M."/>
            <person name="Davila M."/>
            <person name="Darin N."/>
            <person name="Gustafsson C.M."/>
            <person name="Holme E."/>
            <person name="Oldfors A."/>
            <person name="Tulinius M."/>
            <person name="Asin-Cayuela J."/>
        </authorList>
    </citation>
    <scope>INVOLVEMENT IN DEE75</scope>
    <scope>VARIANT DEE75 LEU-279</scope>
</reference>
<reference key="9">
    <citation type="journal article" date="2017" name="J. Hum. Genet.">
        <title>PARS2 and NARS2 mutations in infantile-onset neurodegenerative disorder.</title>
        <authorList>
            <person name="Mizuguchi T."/>
            <person name="Nakashima M."/>
            <person name="Kato M."/>
            <person name="Yamada K."/>
            <person name="Okanishi T."/>
            <person name="Ekhilevitch N."/>
            <person name="Mandel H."/>
            <person name="Eran A."/>
            <person name="Toyono M."/>
            <person name="Sawaishi Y."/>
            <person name="Motoi H."/>
            <person name="Shiina M."/>
            <person name="Ogata K."/>
            <person name="Miyatake S."/>
            <person name="Miyake N."/>
            <person name="Saitsu H."/>
            <person name="Matsumoto N."/>
        </authorList>
    </citation>
    <scope>INVOLVEMENT IN DEE75</scope>
    <scope>VARIANTS DEE75 ILE-95 AND LYS-203</scope>
</reference>
<reference key="10">
    <citation type="journal article" date="2017" name="J. Hum. Genet.">
        <authorList>
            <person name="Mizuguchi T."/>
            <person name="Nakashima M."/>
            <person name="Kato M."/>
            <person name="Yamada K."/>
            <person name="Okanishi T."/>
            <person name="Ekhilevitch N."/>
            <person name="Mandel H."/>
            <person name="Eran A."/>
            <person name="Toyono M."/>
            <person name="Sawaishi Y."/>
            <person name="Motoi H."/>
            <person name="Shiina M."/>
            <person name="Ogata K."/>
            <person name="Miyatake S."/>
            <person name="Miyake N."/>
            <person name="Saitsu H."/>
            <person name="Matsumoto N."/>
        </authorList>
    </citation>
    <scope>ERRATUM OF PUBMED:28077841</scope>
</reference>
<reference key="11">
    <citation type="journal article" date="2018" name="J. Hum. Genet.">
        <title>Clinical and molecular characteristics of newly reported mitochondrial disease entity caused by biallelic PARS2 mutations.</title>
        <authorList>
            <person name="Ciara E."/>
            <person name="Rokicki D."/>
            <person name="Lazniewski M."/>
            <person name="Mierzewska H."/>
            <person name="Jurkiewicz E."/>
            <person name="Bekiesinska-Figatowska M."/>
            <person name="Piekutowska-Abramczuk D."/>
            <person name="Iwanicka-Pronicka K."/>
            <person name="Szymanska E."/>
            <person name="Stawinski P."/>
            <person name="Kosinska J."/>
            <person name="Pollak A."/>
            <person name="Pronicki M."/>
            <person name="Plewczynski D."/>
            <person name="Ploski R."/>
            <person name="Pronicka E."/>
        </authorList>
    </citation>
    <scope>INVOLVEMENT IN DEE75</scope>
    <scope>VARIANTS DEE75 THR-80 AND ARG-364</scope>
</reference>
<reference key="12">
    <citation type="journal article" date="2018" name="J. Hum. Genet.">
        <title>The genotypic and phenotypic spectrum of PARS2-related infantile-onset encephalopathy.</title>
        <authorList>
            <person name="Yin X."/>
            <person name="Tang B."/>
            <person name="Mao X."/>
            <person name="Peng J."/>
            <person name="Zeng S."/>
            <person name="Wang Y."/>
            <person name="Jiang H."/>
            <person name="Li N."/>
        </authorList>
    </citation>
    <scope>INVOLVEMENT IN DEE75</scope>
    <scope>VARIANTS DEE75 ILE-95 AND GLY-202</scope>
</reference>
<reference key="13">
    <citation type="journal article" date="2019" name="Genet. Med.">
        <title>Autozygome and high throughput confirmation of disease genes candidacy.</title>
        <authorList>
            <person name="Maddirevula S."/>
            <person name="Alzahrani F."/>
            <person name="Al-Owain M."/>
            <person name="Al Muhaizea M.A."/>
            <person name="Kayyali H.R."/>
            <person name="AlHashem A."/>
            <person name="Rahbeeni Z."/>
            <person name="Al-Otaibi M."/>
            <person name="Alzaidan H.I."/>
            <person name="Balobaid A."/>
            <person name="El Khashab H.Y."/>
            <person name="Bubshait D.K."/>
            <person name="Faden M."/>
            <person name="Yamani S.A."/>
            <person name="Dabbagh O."/>
            <person name="Al-Mureikhi M."/>
            <person name="Jasser A.A."/>
            <person name="Alsaif H.S."/>
            <person name="Alluhaydan I."/>
            <person name="Seidahmed M.Z."/>
            <person name="Alabbasi B.H."/>
            <person name="Almogarri I."/>
            <person name="Kurdi W."/>
            <person name="Akleh H."/>
            <person name="Qari A."/>
            <person name="Al Tala S.M."/>
            <person name="Alhomaidi S."/>
            <person name="Kentab A.Y."/>
            <person name="Salih M.A."/>
            <person name="Chedrawi A."/>
            <person name="Alameer S."/>
            <person name="Tabarki B."/>
            <person name="Shamseldin H.E."/>
            <person name="Patel N."/>
            <person name="Ibrahim N."/>
            <person name="Abdulwahab F."/>
            <person name="Samira M."/>
            <person name="Goljan E."/>
            <person name="Abouelhoda M."/>
            <person name="Meyer B.F."/>
            <person name="Hashem M."/>
            <person name="Shaheen R."/>
            <person name="AlShahwan S."/>
            <person name="Alfadhel M."/>
            <person name="Ben-Omran T."/>
            <person name="Al-Qattan M.M."/>
            <person name="Monies D."/>
            <person name="Alkuraya F.S."/>
        </authorList>
    </citation>
    <scope>VARIANT DEE75 ILE-95</scope>
</reference>
<reference key="14">
    <citation type="journal article" date="2022" name="Neurol. Sci.">
        <title>Four pedigrees with aminoacyl-tRNA synthetase abnormalities.</title>
        <authorList>
            <person name="Okamoto N."/>
            <person name="Miya F."/>
            <person name="Tsunoda T."/>
            <person name="Kanemura Y."/>
            <person name="Saitoh S."/>
            <person name="Kato M."/>
            <person name="Yanagi K."/>
            <person name="Kaname T."/>
            <person name="Kosaki K."/>
        </authorList>
    </citation>
    <scope>VARIANTS ILE-95 AND ARG-103 DEL</scope>
</reference>